<feature type="chain" id="PRO_1000087209" description="Large ribosomal subunit protein uL23">
    <location>
        <begin position="1"/>
        <end position="86"/>
    </location>
</feature>
<accession>A8MB73</accession>
<reference key="1">
    <citation type="submission" date="2007-10" db="EMBL/GenBank/DDBJ databases">
        <title>Complete sequence of Caldivirga maquilingensis IC-167.</title>
        <authorList>
            <consortium name="US DOE Joint Genome Institute"/>
            <person name="Copeland A."/>
            <person name="Lucas S."/>
            <person name="Lapidus A."/>
            <person name="Barry K."/>
            <person name="Glavina del Rio T."/>
            <person name="Dalin E."/>
            <person name="Tice H."/>
            <person name="Pitluck S."/>
            <person name="Saunders E."/>
            <person name="Brettin T."/>
            <person name="Bruce D."/>
            <person name="Detter J.C."/>
            <person name="Han C."/>
            <person name="Schmutz J."/>
            <person name="Larimer F."/>
            <person name="Land M."/>
            <person name="Hauser L."/>
            <person name="Kyrpides N."/>
            <person name="Ivanova N."/>
            <person name="Biddle J.F."/>
            <person name="Zhang Z."/>
            <person name="Fitz-Gibbon S.T."/>
            <person name="Lowe T.M."/>
            <person name="Saltikov C."/>
            <person name="House C.H."/>
            <person name="Richardson P."/>
        </authorList>
    </citation>
    <scope>NUCLEOTIDE SEQUENCE [LARGE SCALE GENOMIC DNA]</scope>
    <source>
        <strain>ATCC 700844 / DSM 13496 / JCM 10307 / IC-167</strain>
    </source>
</reference>
<sequence length="86" mass="9791">MSTQPIITRFVLTEKAIRLAEKENTLTIVVPRSVNKKVIKDYVEKAYKVKVIDVRTLITMEGEKKAYVRLSSENNAIELLTNLGLL</sequence>
<name>RL23_CALMQ</name>
<proteinExistence type="inferred from homology"/>
<dbReference type="EMBL" id="CP000852">
    <property type="protein sequence ID" value="ABW01163.1"/>
    <property type="molecule type" value="Genomic_DNA"/>
</dbReference>
<dbReference type="RefSeq" id="WP_012185383.1">
    <property type="nucleotide sequence ID" value="NC_009954.1"/>
</dbReference>
<dbReference type="SMR" id="A8MB73"/>
<dbReference type="STRING" id="397948.Cmaq_0315"/>
<dbReference type="GeneID" id="5710452"/>
<dbReference type="KEGG" id="cma:Cmaq_0315"/>
<dbReference type="eggNOG" id="arCOG04072">
    <property type="taxonomic scope" value="Archaea"/>
</dbReference>
<dbReference type="HOGENOM" id="CLU_037562_4_2_2"/>
<dbReference type="OrthoDB" id="7751at2157"/>
<dbReference type="Proteomes" id="UP000001137">
    <property type="component" value="Chromosome"/>
</dbReference>
<dbReference type="GO" id="GO:1990904">
    <property type="term" value="C:ribonucleoprotein complex"/>
    <property type="evidence" value="ECO:0007669"/>
    <property type="project" value="UniProtKB-KW"/>
</dbReference>
<dbReference type="GO" id="GO:0005840">
    <property type="term" value="C:ribosome"/>
    <property type="evidence" value="ECO:0007669"/>
    <property type="project" value="UniProtKB-KW"/>
</dbReference>
<dbReference type="GO" id="GO:0019843">
    <property type="term" value="F:rRNA binding"/>
    <property type="evidence" value="ECO:0007669"/>
    <property type="project" value="UniProtKB-UniRule"/>
</dbReference>
<dbReference type="GO" id="GO:0003735">
    <property type="term" value="F:structural constituent of ribosome"/>
    <property type="evidence" value="ECO:0007669"/>
    <property type="project" value="InterPro"/>
</dbReference>
<dbReference type="GO" id="GO:0006412">
    <property type="term" value="P:translation"/>
    <property type="evidence" value="ECO:0007669"/>
    <property type="project" value="UniProtKB-UniRule"/>
</dbReference>
<dbReference type="Gene3D" id="3.30.70.330">
    <property type="match status" value="1"/>
</dbReference>
<dbReference type="HAMAP" id="MF_01369_A">
    <property type="entry name" value="Ribosomal_uL23_A"/>
    <property type="match status" value="1"/>
</dbReference>
<dbReference type="InterPro" id="IPR012677">
    <property type="entry name" value="Nucleotide-bd_a/b_plait_sf"/>
</dbReference>
<dbReference type="InterPro" id="IPR019985">
    <property type="entry name" value="Ribosomal_uL23"/>
</dbReference>
<dbReference type="InterPro" id="IPR013025">
    <property type="entry name" value="Ribosomal_uL23-like"/>
</dbReference>
<dbReference type="InterPro" id="IPR012678">
    <property type="entry name" value="Ribosomal_uL23/eL15/eS24_sf"/>
</dbReference>
<dbReference type="InterPro" id="IPR001014">
    <property type="entry name" value="Ribosomal_uL23_CS"/>
</dbReference>
<dbReference type="NCBIfam" id="NF011118">
    <property type="entry name" value="PRK14548.1"/>
    <property type="match status" value="1"/>
</dbReference>
<dbReference type="NCBIfam" id="TIGR03636">
    <property type="entry name" value="uL23_arch"/>
    <property type="match status" value="1"/>
</dbReference>
<dbReference type="PANTHER" id="PTHR11620">
    <property type="entry name" value="60S RIBOSOMAL PROTEIN L23A"/>
    <property type="match status" value="1"/>
</dbReference>
<dbReference type="Pfam" id="PF00276">
    <property type="entry name" value="Ribosomal_L23"/>
    <property type="match status" value="1"/>
</dbReference>
<dbReference type="SUPFAM" id="SSF54189">
    <property type="entry name" value="Ribosomal proteins S24e, L23 and L15e"/>
    <property type="match status" value="1"/>
</dbReference>
<dbReference type="PROSITE" id="PS00050">
    <property type="entry name" value="RIBOSOMAL_L23"/>
    <property type="match status" value="1"/>
</dbReference>
<evidence type="ECO:0000255" key="1">
    <source>
        <dbReference type="HAMAP-Rule" id="MF_01369"/>
    </source>
</evidence>
<evidence type="ECO:0000305" key="2"/>
<comment type="function">
    <text evidence="1">Binds to 23S rRNA. One of the proteins that surrounds the polypeptide exit tunnel on the outside of the ribosome.</text>
</comment>
<comment type="subunit">
    <text evidence="1">Part of the 50S ribosomal subunit. Contacts protein L29.</text>
</comment>
<comment type="similarity">
    <text evidence="1">Belongs to the universal ribosomal protein uL23 family.</text>
</comment>
<organism>
    <name type="scientific">Caldivirga maquilingensis (strain ATCC 700844 / DSM 13496 / JCM 10307 / IC-167)</name>
    <dbReference type="NCBI Taxonomy" id="397948"/>
    <lineage>
        <taxon>Archaea</taxon>
        <taxon>Thermoproteota</taxon>
        <taxon>Thermoprotei</taxon>
        <taxon>Thermoproteales</taxon>
        <taxon>Thermoproteaceae</taxon>
        <taxon>Caldivirga</taxon>
    </lineage>
</organism>
<keyword id="KW-1185">Reference proteome</keyword>
<keyword id="KW-0687">Ribonucleoprotein</keyword>
<keyword id="KW-0689">Ribosomal protein</keyword>
<keyword id="KW-0694">RNA-binding</keyword>
<keyword id="KW-0699">rRNA-binding</keyword>
<gene>
    <name evidence="1" type="primary">rpl23</name>
    <name type="ordered locus">Cmaq_0315</name>
</gene>
<protein>
    <recommendedName>
        <fullName evidence="1">Large ribosomal subunit protein uL23</fullName>
    </recommendedName>
    <alternativeName>
        <fullName evidence="2">50S ribosomal protein L23</fullName>
    </alternativeName>
</protein>